<accession>Q02431</accession>
<accession>Q3J198</accession>
<accession>Q9RFC2</accession>
<organism>
    <name type="scientific">Cereibacter sphaeroides (strain ATCC 17023 / DSM 158 / JCM 6121 / CCUG 31486 / LMG 2827 / NBRC 12203 / NCIMB 8253 / ATH 2.4.1.)</name>
    <name type="common">Rhodobacter sphaeroides</name>
    <dbReference type="NCBI Taxonomy" id="272943"/>
    <lineage>
        <taxon>Bacteria</taxon>
        <taxon>Pseudomonadati</taxon>
        <taxon>Pseudomonadota</taxon>
        <taxon>Alphaproteobacteria</taxon>
        <taxon>Rhodobacterales</taxon>
        <taxon>Paracoccaceae</taxon>
        <taxon>Cereibacter</taxon>
    </lineage>
</organism>
<name>BCHX_CERS4</name>
<dbReference type="EC" id="1.3.7.15" evidence="3"/>
<dbReference type="EMBL" id="AJ010302">
    <property type="protein sequence ID" value="CAB38747.1"/>
    <property type="molecule type" value="Genomic_DNA"/>
</dbReference>
<dbReference type="EMBL" id="AF195122">
    <property type="protein sequence ID" value="AAF24297.1"/>
    <property type="molecule type" value="Genomic_DNA"/>
</dbReference>
<dbReference type="EMBL" id="CP000143">
    <property type="protein sequence ID" value="ABA79436.1"/>
    <property type="molecule type" value="Genomic_DNA"/>
</dbReference>
<dbReference type="PIR" id="S30915">
    <property type="entry name" value="S30915"/>
</dbReference>
<dbReference type="PIR" id="T50753">
    <property type="entry name" value="T50753"/>
</dbReference>
<dbReference type="RefSeq" id="WP_002720427.1">
    <property type="nucleotide sequence ID" value="NZ_CP030271.1"/>
</dbReference>
<dbReference type="RefSeq" id="YP_353337.1">
    <property type="nucleotide sequence ID" value="NC_007493.2"/>
</dbReference>
<dbReference type="SMR" id="Q02431"/>
<dbReference type="STRING" id="272943.RSP_0262"/>
<dbReference type="EnsemblBacteria" id="ABA79436">
    <property type="protein sequence ID" value="ABA79436"/>
    <property type="gene ID" value="RSP_0262"/>
</dbReference>
<dbReference type="KEGG" id="rsp:RSP_0262"/>
<dbReference type="PATRIC" id="fig|272943.9.peg.2206"/>
<dbReference type="eggNOG" id="COG1348">
    <property type="taxonomic scope" value="Bacteria"/>
</dbReference>
<dbReference type="OrthoDB" id="9778641at2"/>
<dbReference type="PhylomeDB" id="Q02431"/>
<dbReference type="BioCyc" id="MetaCyc:MONOMER-13259"/>
<dbReference type="BRENDA" id="1.3.7.15">
    <property type="organism ID" value="5383"/>
</dbReference>
<dbReference type="UniPathway" id="UPA00669"/>
<dbReference type="Proteomes" id="UP000002703">
    <property type="component" value="Chromosome 1"/>
</dbReference>
<dbReference type="GO" id="GO:0051539">
    <property type="term" value="F:4 iron, 4 sulfur cluster binding"/>
    <property type="evidence" value="ECO:0007669"/>
    <property type="project" value="UniProtKB-KW"/>
</dbReference>
<dbReference type="GO" id="GO:0005524">
    <property type="term" value="F:ATP binding"/>
    <property type="evidence" value="ECO:0007669"/>
    <property type="project" value="UniProtKB-KW"/>
</dbReference>
<dbReference type="GO" id="GO:0046872">
    <property type="term" value="F:metal ion binding"/>
    <property type="evidence" value="ECO:0007669"/>
    <property type="project" value="UniProtKB-KW"/>
</dbReference>
<dbReference type="GO" id="GO:0016628">
    <property type="term" value="F:oxidoreductase activity, acting on the CH-CH group of donors, NAD or NADP as acceptor"/>
    <property type="evidence" value="ECO:0007669"/>
    <property type="project" value="InterPro"/>
</dbReference>
<dbReference type="GO" id="GO:0030494">
    <property type="term" value="P:bacteriochlorophyll biosynthetic process"/>
    <property type="evidence" value="ECO:0007669"/>
    <property type="project" value="UniProtKB-UniPathway"/>
</dbReference>
<dbReference type="GO" id="GO:0015979">
    <property type="term" value="P:photosynthesis"/>
    <property type="evidence" value="ECO:0007669"/>
    <property type="project" value="UniProtKB-KW"/>
</dbReference>
<dbReference type="CDD" id="cd02033">
    <property type="entry name" value="BchX"/>
    <property type="match status" value="1"/>
</dbReference>
<dbReference type="Gene3D" id="3.40.50.300">
    <property type="entry name" value="P-loop containing nucleotide triphosphate hydrolases"/>
    <property type="match status" value="1"/>
</dbReference>
<dbReference type="InterPro" id="IPR010246">
    <property type="entry name" value="BchX"/>
</dbReference>
<dbReference type="InterPro" id="IPR030655">
    <property type="entry name" value="NifH/chlL_CS"/>
</dbReference>
<dbReference type="InterPro" id="IPR000392">
    <property type="entry name" value="NifH/frxC"/>
</dbReference>
<dbReference type="InterPro" id="IPR027417">
    <property type="entry name" value="P-loop_NTPase"/>
</dbReference>
<dbReference type="NCBIfam" id="TIGR02016">
    <property type="entry name" value="BchX"/>
    <property type="match status" value="1"/>
</dbReference>
<dbReference type="PANTHER" id="PTHR42864">
    <property type="entry name" value="LIGHT-INDEPENDENT PROTOCHLOROPHYLLIDE REDUCTASE IRON-SULFUR ATP-BINDING PROTEIN"/>
    <property type="match status" value="1"/>
</dbReference>
<dbReference type="PANTHER" id="PTHR42864:SF2">
    <property type="entry name" value="LIGHT-INDEPENDENT PROTOCHLOROPHYLLIDE REDUCTASE IRON-SULFUR ATP-BINDING PROTEIN"/>
    <property type="match status" value="1"/>
</dbReference>
<dbReference type="Pfam" id="PF00142">
    <property type="entry name" value="Fer4_NifH"/>
    <property type="match status" value="1"/>
</dbReference>
<dbReference type="PRINTS" id="PR00091">
    <property type="entry name" value="NITROGNASEII"/>
</dbReference>
<dbReference type="SUPFAM" id="SSF52540">
    <property type="entry name" value="P-loop containing nucleoside triphosphate hydrolases"/>
    <property type="match status" value="1"/>
</dbReference>
<dbReference type="PROSITE" id="PS00746">
    <property type="entry name" value="NIFH_FRXC_1"/>
    <property type="match status" value="1"/>
</dbReference>
<dbReference type="PROSITE" id="PS00692">
    <property type="entry name" value="NIFH_FRXC_2"/>
    <property type="match status" value="1"/>
</dbReference>
<dbReference type="PROSITE" id="PS51026">
    <property type="entry name" value="NIFH_FRXC_3"/>
    <property type="match status" value="1"/>
</dbReference>
<keyword id="KW-0004">4Fe-4S</keyword>
<keyword id="KW-0067">ATP-binding</keyword>
<keyword id="KW-0077">Bacteriochlorophyll biosynthesis</keyword>
<keyword id="KW-0149">Chlorophyll biosynthesis</keyword>
<keyword id="KW-0408">Iron</keyword>
<keyword id="KW-0411">Iron-sulfur</keyword>
<keyword id="KW-0460">Magnesium</keyword>
<keyword id="KW-0479">Metal-binding</keyword>
<keyword id="KW-0547">Nucleotide-binding</keyword>
<keyword id="KW-0560">Oxidoreductase</keyword>
<keyword id="KW-0602">Photosynthesis</keyword>
<keyword id="KW-1185">Reference proteome</keyword>
<comment type="function">
    <text evidence="3">Converts chlorophylls (Chl) into bacteriochlorophylls (BChl) by reducing ring B of the tetrapyrrole.</text>
</comment>
<comment type="catalytic activity">
    <reaction evidence="3">
        <text>3-deacetyl-3-vinylbacteriochlorophyllide a + 2 oxidized [2Fe-2S]-[ferredoxin] + ADP + phosphate = chlorophyllide a + 2 reduced [2Fe-2S]-[ferredoxin] + ATP + H2O + H(+)</text>
        <dbReference type="Rhea" id="RHEA:37051"/>
        <dbReference type="Rhea" id="RHEA-COMP:10000"/>
        <dbReference type="Rhea" id="RHEA-COMP:10001"/>
        <dbReference type="ChEBI" id="CHEBI:15377"/>
        <dbReference type="ChEBI" id="CHEBI:15378"/>
        <dbReference type="ChEBI" id="CHEBI:30616"/>
        <dbReference type="ChEBI" id="CHEBI:33737"/>
        <dbReference type="ChEBI" id="CHEBI:33738"/>
        <dbReference type="ChEBI" id="CHEBI:43474"/>
        <dbReference type="ChEBI" id="CHEBI:83348"/>
        <dbReference type="ChEBI" id="CHEBI:83373"/>
        <dbReference type="ChEBI" id="CHEBI:456216"/>
        <dbReference type="EC" id="1.3.7.15"/>
    </reaction>
</comment>
<comment type="catalytic activity">
    <reaction evidence="3">
        <text>bacteriochlorophyllide a + 2 oxidized [2Fe-2S]-[ferredoxin] + ADP + phosphate = 3-acetyl-3-devinylchlorophyllide a + 2 reduced [2Fe-2S]-[ferredoxin] + ATP + H2O + H(+)</text>
        <dbReference type="Rhea" id="RHEA:48944"/>
        <dbReference type="Rhea" id="RHEA-COMP:10000"/>
        <dbReference type="Rhea" id="RHEA-COMP:10001"/>
        <dbReference type="ChEBI" id="CHEBI:15377"/>
        <dbReference type="ChEBI" id="CHEBI:15378"/>
        <dbReference type="ChEBI" id="CHEBI:30616"/>
        <dbReference type="ChEBI" id="CHEBI:33737"/>
        <dbReference type="ChEBI" id="CHEBI:33738"/>
        <dbReference type="ChEBI" id="CHEBI:43474"/>
        <dbReference type="ChEBI" id="CHEBI:90794"/>
        <dbReference type="ChEBI" id="CHEBI:90795"/>
        <dbReference type="ChEBI" id="CHEBI:456216"/>
        <dbReference type="EC" id="1.3.7.15"/>
    </reaction>
</comment>
<comment type="catalytic activity">
    <reaction evidence="3">
        <text>3-deacetyl-3-(1-hydroxyethyl)bacteriochlorophyllide a + 2 oxidized [2Fe-2S]-[ferredoxin] + ADP + phosphate = 3-devinyl-3-(1-hydroxyethyl)chlorophyllide a + 2 reduced [2Fe-2S]-[ferredoxin] + ATP + H2O + H(+)</text>
        <dbReference type="Rhea" id="RHEA:48948"/>
        <dbReference type="Rhea" id="RHEA-COMP:10000"/>
        <dbReference type="Rhea" id="RHEA-COMP:10001"/>
        <dbReference type="ChEBI" id="CHEBI:15377"/>
        <dbReference type="ChEBI" id="CHEBI:15378"/>
        <dbReference type="ChEBI" id="CHEBI:30616"/>
        <dbReference type="ChEBI" id="CHEBI:33737"/>
        <dbReference type="ChEBI" id="CHEBI:33738"/>
        <dbReference type="ChEBI" id="CHEBI:43474"/>
        <dbReference type="ChEBI" id="CHEBI:90791"/>
        <dbReference type="ChEBI" id="CHEBI:90792"/>
        <dbReference type="ChEBI" id="CHEBI:456216"/>
        <dbReference type="EC" id="1.3.7.15"/>
    </reaction>
</comment>
<comment type="cofactor">
    <cofactor evidence="2">
        <name>[4Fe-4S] cluster</name>
        <dbReference type="ChEBI" id="CHEBI:49883"/>
    </cofactor>
    <text evidence="2">Binds 1 [4Fe-4S] cluster per dimer.</text>
</comment>
<comment type="pathway">
    <text>Porphyrin-containing compound metabolism; bacteriochlorophyll biosynthesis.</text>
</comment>
<comment type="subunit">
    <text evidence="2 4">Homodimer (By similarity). Chlorophyllide reductase is composed of three subunits; BchX, BchY and BchZ (By similarity).</text>
</comment>
<comment type="similarity">
    <text evidence="6">Belongs to the NifH/BchL/ChlL family.</text>
</comment>
<evidence type="ECO:0000250" key="1"/>
<evidence type="ECO:0000250" key="2">
    <source>
        <dbReference type="UniProtKB" id="D5ANS3"/>
    </source>
</evidence>
<evidence type="ECO:0000250" key="3">
    <source>
        <dbReference type="UniProtKB" id="P26177"/>
    </source>
</evidence>
<evidence type="ECO:0000250" key="4">
    <source>
        <dbReference type="UniProtKB" id="P26178"/>
    </source>
</evidence>
<evidence type="ECO:0000256" key="5">
    <source>
        <dbReference type="SAM" id="MobiDB-lite"/>
    </source>
</evidence>
<evidence type="ECO:0000305" key="6"/>
<sequence>MTDAPELKAFDQRLRDEAAEEPTLEVPQGEPKKKTQVIAIYGKGGIGKSFTLANLSYMMAQIGKRVLLIGCDPKSDTTSLLFGGKACPTIIETSARKKLAGEEVQIGDVCFKRDGVFAMELGGPEVGRGCGGRGIIHGFELLEKLGFHDWDFDYVLLDFLGDVVCGGFGLPIARDMAQKVILVGSNDLQSLYVTNNVCSAVEYFRKLGGNVGVAGLVINKDDGTGEAKAFAEAADIPILATIPADEDLRRKSANYQIVGIPGTQWGPLFEGLAHAVGEAPPIRPKPLSQDGLLDLFTPEAIGADFKLEPATDADMRGKNAAAKKSLEVIYDDA</sequence>
<reference key="1">
    <citation type="journal article" date="1993" name="Mol. Gen. Genet.">
        <title>Genetic analysis of the bchC and bchA genes of Rhodobacter sphaeroides.</title>
        <authorList>
            <person name="McGlynn P."/>
            <person name="Hunter C.N."/>
        </authorList>
    </citation>
    <scope>NUCLEOTIDE SEQUENCE [GENOMIC DNA]</scope>
</reference>
<reference key="2">
    <citation type="journal article" date="2000" name="Nucleic Acids Res.">
        <title>DNA sequence analysis of the photosynthesis region of Rhodobacter sphaeroides 2.4.1.</title>
        <authorList>
            <person name="Choudhary M."/>
            <person name="Kaplan S."/>
        </authorList>
    </citation>
    <scope>NUCLEOTIDE SEQUENCE [GENOMIC DNA]</scope>
</reference>
<reference key="3">
    <citation type="submission" date="2005-09" db="EMBL/GenBank/DDBJ databases">
        <title>Complete sequence of chromosome 1 of Rhodobacter sphaeroides 2.4.1.</title>
        <authorList>
            <person name="Copeland A."/>
            <person name="Lucas S."/>
            <person name="Lapidus A."/>
            <person name="Barry K."/>
            <person name="Detter J.C."/>
            <person name="Glavina T."/>
            <person name="Hammon N."/>
            <person name="Israni S."/>
            <person name="Pitluck S."/>
            <person name="Richardson P."/>
            <person name="Mackenzie C."/>
            <person name="Choudhary M."/>
            <person name="Larimer F."/>
            <person name="Hauser L.J."/>
            <person name="Land M."/>
            <person name="Donohue T.J."/>
            <person name="Kaplan S."/>
        </authorList>
    </citation>
    <scope>NUCLEOTIDE SEQUENCE [LARGE SCALE GENOMIC DNA]</scope>
    <source>
        <strain>ATCC 17023 / DSM 158 / JCM 6121 / CCUG 31486 / LMG 2827 / NBRC 12203 / NCIMB 8253 / ATH 2.4.1.</strain>
    </source>
</reference>
<feature type="chain" id="PRO_0000139549" description="Chlorophyllide reductase 35.5 kDa chain">
    <location>
        <begin position="1"/>
        <end position="333"/>
    </location>
</feature>
<feature type="region of interest" description="Disordered" evidence="5">
    <location>
        <begin position="1"/>
        <end position="30"/>
    </location>
</feature>
<feature type="compositionally biased region" description="Basic and acidic residues" evidence="5">
    <location>
        <begin position="1"/>
        <end position="17"/>
    </location>
</feature>
<feature type="binding site" evidence="1">
    <location>
        <begin position="45"/>
        <end position="50"/>
    </location>
    <ligand>
        <name>ATP</name>
        <dbReference type="ChEBI" id="CHEBI:30616"/>
    </ligand>
</feature>
<feature type="binding site" evidence="1">
    <location>
        <position position="49"/>
    </location>
    <ligand>
        <name>Mg(2+)</name>
        <dbReference type="ChEBI" id="CHEBI:18420"/>
    </ligand>
</feature>
<feature type="binding site" evidence="1">
    <location>
        <position position="74"/>
    </location>
    <ligand>
        <name>ATP</name>
        <dbReference type="ChEBI" id="CHEBI:30616"/>
    </ligand>
</feature>
<feature type="binding site" evidence="1">
    <location>
        <position position="130"/>
    </location>
    <ligand>
        <name>[4Fe-4S] cluster</name>
        <dbReference type="ChEBI" id="CHEBI:49883"/>
        <note>ligand shared between dimeric partners</note>
    </ligand>
</feature>
<feature type="binding site" evidence="1">
    <location>
        <position position="165"/>
    </location>
    <ligand>
        <name>[4Fe-4S] cluster</name>
        <dbReference type="ChEBI" id="CHEBI:49883"/>
        <note>ligand shared between dimeric partners</note>
    </ligand>
</feature>
<feature type="binding site" evidence="1">
    <location>
        <begin position="219"/>
        <end position="220"/>
    </location>
    <ligand>
        <name>ATP</name>
        <dbReference type="ChEBI" id="CHEBI:30616"/>
    </ligand>
</feature>
<feature type="sequence conflict" description="In Ref. 2; AAF24297." evidence="6" ref="2">
    <original>G</original>
    <variation>A</variation>
    <location>
        <position position="127"/>
    </location>
</feature>
<protein>
    <recommendedName>
        <fullName>Chlorophyllide reductase 35.5 kDa chain</fullName>
        <ecNumber evidence="3">1.3.7.15</ecNumber>
    </recommendedName>
    <alternativeName>
        <fullName>Chlorin reductase</fullName>
    </alternativeName>
</protein>
<proteinExistence type="inferred from homology"/>
<gene>
    <name type="primary">bchX</name>
    <name type="ordered locus">RHOS4_18680</name>
    <name type="ORF">RSP_0262</name>
</gene>